<sequence>MAANKERTFIAIKPDGVQRGLMGDIIKRFEQKGFRLVAMKFLQASQDLLRQHYIDLKDRPFYPGLVEYMNSGPVLAMVWEGLNVVKTGRVMLGETNPADSKPGTIRGDLCIQVGRNIIHGSDSVDSANKEIALWFKDEELVEYKSCAYEWVYEN</sequence>
<accession>P70011</accession>
<accession>Q5PQ80</accession>
<proteinExistence type="evidence at transcript level"/>
<feature type="chain" id="PRO_0000137121" description="Nucleoside diphosphate kinase A2">
    <location>
        <begin position="1"/>
        <end position="154"/>
    </location>
</feature>
<feature type="active site" description="Pros-phosphohistidine intermediate" evidence="1">
    <location>
        <position position="119"/>
    </location>
</feature>
<feature type="binding site" evidence="1">
    <location>
        <position position="13"/>
    </location>
    <ligand>
        <name>ATP</name>
        <dbReference type="ChEBI" id="CHEBI:30616"/>
    </ligand>
</feature>
<feature type="binding site" evidence="1">
    <location>
        <position position="61"/>
    </location>
    <ligand>
        <name>ATP</name>
        <dbReference type="ChEBI" id="CHEBI:30616"/>
    </ligand>
</feature>
<feature type="binding site" evidence="1">
    <location>
        <position position="89"/>
    </location>
    <ligand>
        <name>ATP</name>
        <dbReference type="ChEBI" id="CHEBI:30616"/>
    </ligand>
</feature>
<feature type="binding site" evidence="1">
    <location>
        <position position="95"/>
    </location>
    <ligand>
        <name>ATP</name>
        <dbReference type="ChEBI" id="CHEBI:30616"/>
    </ligand>
</feature>
<feature type="binding site" evidence="1">
    <location>
        <position position="106"/>
    </location>
    <ligand>
        <name>ATP</name>
        <dbReference type="ChEBI" id="CHEBI:30616"/>
    </ligand>
</feature>
<feature type="binding site" evidence="1">
    <location>
        <position position="116"/>
    </location>
    <ligand>
        <name>ATP</name>
        <dbReference type="ChEBI" id="CHEBI:30616"/>
    </ligand>
</feature>
<comment type="function">
    <text>Major role in the synthesis of nucleoside triphosphates other than ATP. The ATP gamma phosphate is transferred to the NDP beta phosphate via a ping-pong mechanism, using a phosphorylated active-site intermediate.</text>
</comment>
<comment type="catalytic activity">
    <reaction>
        <text>a 2'-deoxyribonucleoside 5'-diphosphate + ATP = a 2'-deoxyribonucleoside 5'-triphosphate + ADP</text>
        <dbReference type="Rhea" id="RHEA:44640"/>
        <dbReference type="ChEBI" id="CHEBI:30616"/>
        <dbReference type="ChEBI" id="CHEBI:61560"/>
        <dbReference type="ChEBI" id="CHEBI:73316"/>
        <dbReference type="ChEBI" id="CHEBI:456216"/>
        <dbReference type="EC" id="2.7.4.6"/>
    </reaction>
</comment>
<comment type="catalytic activity">
    <reaction>
        <text>a ribonucleoside 5'-diphosphate + ATP = a ribonucleoside 5'-triphosphate + ADP</text>
        <dbReference type="Rhea" id="RHEA:18113"/>
        <dbReference type="ChEBI" id="CHEBI:30616"/>
        <dbReference type="ChEBI" id="CHEBI:57930"/>
        <dbReference type="ChEBI" id="CHEBI:61557"/>
        <dbReference type="ChEBI" id="CHEBI:456216"/>
        <dbReference type="EC" id="2.7.4.6"/>
    </reaction>
</comment>
<comment type="cofactor">
    <cofactor evidence="1">
        <name>Mg(2+)</name>
        <dbReference type="ChEBI" id="CHEBI:18420"/>
    </cofactor>
</comment>
<comment type="subcellular location">
    <subcellularLocation>
        <location evidence="1">Cytoplasm</location>
    </subcellularLocation>
</comment>
<comment type="similarity">
    <text evidence="2">Belongs to the NDK family.</text>
</comment>
<keyword id="KW-0067">ATP-binding</keyword>
<keyword id="KW-0963">Cytoplasm</keyword>
<keyword id="KW-0418">Kinase</keyword>
<keyword id="KW-0460">Magnesium</keyword>
<keyword id="KW-0479">Metal-binding</keyword>
<keyword id="KW-0546">Nucleotide metabolism</keyword>
<keyword id="KW-0547">Nucleotide-binding</keyword>
<keyword id="KW-0597">Phosphoprotein</keyword>
<keyword id="KW-1185">Reference proteome</keyword>
<keyword id="KW-0808">Transferase</keyword>
<name>NDKA2_XENLA</name>
<organism>
    <name type="scientific">Xenopus laevis</name>
    <name type="common">African clawed frog</name>
    <dbReference type="NCBI Taxonomy" id="8355"/>
    <lineage>
        <taxon>Eukaryota</taxon>
        <taxon>Metazoa</taxon>
        <taxon>Chordata</taxon>
        <taxon>Craniata</taxon>
        <taxon>Vertebrata</taxon>
        <taxon>Euteleostomi</taxon>
        <taxon>Amphibia</taxon>
        <taxon>Batrachia</taxon>
        <taxon>Anura</taxon>
        <taxon>Pipoidea</taxon>
        <taxon>Pipidae</taxon>
        <taxon>Xenopodinae</taxon>
        <taxon>Xenopus</taxon>
        <taxon>Xenopus</taxon>
    </lineage>
</organism>
<dbReference type="EC" id="2.7.4.6"/>
<dbReference type="EMBL" id="X97902">
    <property type="protein sequence ID" value="CAA66476.1"/>
    <property type="molecule type" value="mRNA"/>
</dbReference>
<dbReference type="EMBL" id="BC087324">
    <property type="protein sequence ID" value="AAH87324.1"/>
    <property type="molecule type" value="mRNA"/>
</dbReference>
<dbReference type="RefSeq" id="NP_001084144.1">
    <property type="nucleotide sequence ID" value="NM_001090675.1"/>
</dbReference>
<dbReference type="RefSeq" id="XP_018096108.1">
    <property type="nucleotide sequence ID" value="XM_018240619.2"/>
</dbReference>
<dbReference type="RefSeq" id="XP_018096109.1">
    <property type="nucleotide sequence ID" value="XM_018240620.1"/>
</dbReference>
<dbReference type="RefSeq" id="XP_041433655.1">
    <property type="nucleotide sequence ID" value="XM_041577721.1"/>
</dbReference>
<dbReference type="SMR" id="P70011"/>
<dbReference type="DNASU" id="399333"/>
<dbReference type="GeneID" id="399333"/>
<dbReference type="KEGG" id="xla:399333"/>
<dbReference type="AGR" id="Xenbase:XB-GENE-6254044"/>
<dbReference type="CTD" id="399333"/>
<dbReference type="Xenbase" id="XB-GENE-6254044">
    <property type="gene designation" value="nme2.S"/>
</dbReference>
<dbReference type="OrthoDB" id="2162449at2759"/>
<dbReference type="Proteomes" id="UP000186698">
    <property type="component" value="Chromosome 9_10S"/>
</dbReference>
<dbReference type="Bgee" id="399333">
    <property type="expression patterns" value="Expressed in muscle tissue and 19 other cell types or tissues"/>
</dbReference>
<dbReference type="GO" id="GO:0005737">
    <property type="term" value="C:cytoplasm"/>
    <property type="evidence" value="ECO:0007669"/>
    <property type="project" value="UniProtKB-SubCell"/>
</dbReference>
<dbReference type="GO" id="GO:0005524">
    <property type="term" value="F:ATP binding"/>
    <property type="evidence" value="ECO:0007669"/>
    <property type="project" value="UniProtKB-KW"/>
</dbReference>
<dbReference type="GO" id="GO:0046872">
    <property type="term" value="F:metal ion binding"/>
    <property type="evidence" value="ECO:0007669"/>
    <property type="project" value="UniProtKB-KW"/>
</dbReference>
<dbReference type="GO" id="GO:0004550">
    <property type="term" value="F:nucleoside diphosphate kinase activity"/>
    <property type="evidence" value="ECO:0007669"/>
    <property type="project" value="UniProtKB-EC"/>
</dbReference>
<dbReference type="GO" id="GO:0006241">
    <property type="term" value="P:CTP biosynthetic process"/>
    <property type="evidence" value="ECO:0007669"/>
    <property type="project" value="InterPro"/>
</dbReference>
<dbReference type="GO" id="GO:0006183">
    <property type="term" value="P:GTP biosynthetic process"/>
    <property type="evidence" value="ECO:0007669"/>
    <property type="project" value="InterPro"/>
</dbReference>
<dbReference type="GO" id="GO:0042981">
    <property type="term" value="P:regulation of apoptotic process"/>
    <property type="evidence" value="ECO:0000318"/>
    <property type="project" value="GO_Central"/>
</dbReference>
<dbReference type="GO" id="GO:0006228">
    <property type="term" value="P:UTP biosynthetic process"/>
    <property type="evidence" value="ECO:0007669"/>
    <property type="project" value="InterPro"/>
</dbReference>
<dbReference type="CDD" id="cd04413">
    <property type="entry name" value="NDPk_I"/>
    <property type="match status" value="1"/>
</dbReference>
<dbReference type="FunFam" id="3.30.70.141:FF:000039">
    <property type="entry name" value="Nucleoside diphosphate kinase B"/>
    <property type="match status" value="1"/>
</dbReference>
<dbReference type="Gene3D" id="3.30.70.141">
    <property type="entry name" value="Nucleoside diphosphate kinase-like domain"/>
    <property type="match status" value="1"/>
</dbReference>
<dbReference type="HAMAP" id="MF_00451">
    <property type="entry name" value="NDP_kinase"/>
    <property type="match status" value="1"/>
</dbReference>
<dbReference type="InterPro" id="IPR034907">
    <property type="entry name" value="NDK-like_dom"/>
</dbReference>
<dbReference type="InterPro" id="IPR036850">
    <property type="entry name" value="NDK-like_dom_sf"/>
</dbReference>
<dbReference type="InterPro" id="IPR001564">
    <property type="entry name" value="Nucleoside_diP_kinase"/>
</dbReference>
<dbReference type="InterPro" id="IPR023005">
    <property type="entry name" value="Nucleoside_diP_kinase_AS"/>
</dbReference>
<dbReference type="NCBIfam" id="NF001908">
    <property type="entry name" value="PRK00668.1"/>
    <property type="match status" value="1"/>
</dbReference>
<dbReference type="PANTHER" id="PTHR11349">
    <property type="entry name" value="NUCLEOSIDE DIPHOSPHATE KINASE"/>
    <property type="match status" value="1"/>
</dbReference>
<dbReference type="Pfam" id="PF00334">
    <property type="entry name" value="NDK"/>
    <property type="match status" value="1"/>
</dbReference>
<dbReference type="PRINTS" id="PR01243">
    <property type="entry name" value="NUCDPKINASE"/>
</dbReference>
<dbReference type="SMART" id="SM00562">
    <property type="entry name" value="NDK"/>
    <property type="match status" value="1"/>
</dbReference>
<dbReference type="SUPFAM" id="SSF54919">
    <property type="entry name" value="Nucleoside diphosphate kinase, NDK"/>
    <property type="match status" value="1"/>
</dbReference>
<dbReference type="PROSITE" id="PS00469">
    <property type="entry name" value="NDPK"/>
    <property type="match status" value="1"/>
</dbReference>
<dbReference type="PROSITE" id="PS51374">
    <property type="entry name" value="NDPK_LIKE"/>
    <property type="match status" value="1"/>
</dbReference>
<reference key="1">
    <citation type="submission" date="1996-05" db="EMBL/GenBank/DDBJ databases">
        <title>Several genes encode the metastasis suppressor NM23/nucleoside diphosphate kinase of Xenopus laevis.</title>
        <authorList>
            <person name="Ouatas T."/>
            <person name="Abdallah B."/>
            <person name="Gasmi L."/>
            <person name="Mazabraud A."/>
        </authorList>
    </citation>
    <scope>NUCLEOTIDE SEQUENCE [MRNA]</scope>
    <source>
        <tissue>Ovary</tissue>
    </source>
</reference>
<reference key="2">
    <citation type="submission" date="2004-12" db="EMBL/GenBank/DDBJ databases">
        <authorList>
            <consortium name="NIH - Xenopus Gene Collection (XGC) project"/>
        </authorList>
    </citation>
    <scope>NUCLEOTIDE SEQUENCE [LARGE SCALE MRNA]</scope>
    <source>
        <tissue>Testis</tissue>
    </source>
</reference>
<protein>
    <recommendedName>
        <fullName>Nucleoside diphosphate kinase A2</fullName>
        <shortName>NDK A2</shortName>
        <shortName>NDP kinase A2</shortName>
        <ecNumber>2.7.4.6</ecNumber>
    </recommendedName>
    <alternativeName>
        <fullName>NM23/nucleoside diphosphate kinase A2</fullName>
    </alternativeName>
</protein>
<evidence type="ECO:0000250" key="1"/>
<evidence type="ECO:0000305" key="2"/>